<keyword id="KW-0002">3D-structure</keyword>
<keyword id="KW-0496">Mitochondrion</keyword>
<keyword id="KW-1185">Reference proteome</keyword>
<keyword id="KW-0687">Ribonucleoprotein</keyword>
<keyword id="KW-0689">Ribosomal protein</keyword>
<proteinExistence type="evidence at protein level"/>
<feature type="chain" id="PRO_0000458616" description="Large ribosomal subunit protein bL19m">
    <location>
        <begin position="1"/>
        <end position="258"/>
    </location>
</feature>
<feature type="region of interest" description="Disordered" evidence="1">
    <location>
        <begin position="235"/>
        <end position="258"/>
    </location>
</feature>
<feature type="compositionally biased region" description="Gly residues" evidence="1">
    <location>
        <begin position="238"/>
        <end position="249"/>
    </location>
</feature>
<protein>
    <recommendedName>
        <fullName evidence="4">Large ribosomal subunit protein bL19m</fullName>
    </recommendedName>
</protein>
<dbReference type="EMBL" id="CM002238">
    <property type="protein sequence ID" value="EAA28105.1"/>
    <property type="molecule type" value="Genomic_DNA"/>
</dbReference>
<dbReference type="RefSeq" id="XP_957341.1">
    <property type="nucleotide sequence ID" value="XM_952248.3"/>
</dbReference>
<dbReference type="PDB" id="6YWS">
    <property type="method" value="EM"/>
    <property type="resolution" value="2.74 A"/>
    <property type="chains" value="M=1-258"/>
</dbReference>
<dbReference type="PDB" id="6YWV">
    <property type="method" value="EM"/>
    <property type="resolution" value="3.03 A"/>
    <property type="chains" value="M=1-258"/>
</dbReference>
<dbReference type="PDB" id="6YWX">
    <property type="method" value="EM"/>
    <property type="resolution" value="3.10 A"/>
    <property type="chains" value="M=1-258"/>
</dbReference>
<dbReference type="PDBsum" id="6YWS"/>
<dbReference type="PDBsum" id="6YWV"/>
<dbReference type="PDBsum" id="6YWX"/>
<dbReference type="EMDB" id="EMD-10973"/>
<dbReference type="EMDB" id="EMD-10977"/>
<dbReference type="EMDB" id="EMD-10978"/>
<dbReference type="SMR" id="Q7RYW8"/>
<dbReference type="STRING" id="367110.Q7RYW8"/>
<dbReference type="PaxDb" id="5141-EFNCRP00000006256"/>
<dbReference type="EnsemblFungi" id="EAA28105">
    <property type="protein sequence ID" value="EAA28105"/>
    <property type="gene ID" value="NCU06450"/>
</dbReference>
<dbReference type="GeneID" id="3873510"/>
<dbReference type="KEGG" id="ncr:NCU06450"/>
<dbReference type="VEuPathDB" id="FungiDB:NCU06450"/>
<dbReference type="HOGENOM" id="CLU_076387_0_1_1"/>
<dbReference type="InParanoid" id="Q7RYW8"/>
<dbReference type="OMA" id="VCLNIRQ"/>
<dbReference type="OrthoDB" id="432645at2759"/>
<dbReference type="Proteomes" id="UP000001805">
    <property type="component" value="Chromosome 3, Linkage Group III"/>
</dbReference>
<dbReference type="GO" id="GO:0005762">
    <property type="term" value="C:mitochondrial large ribosomal subunit"/>
    <property type="evidence" value="ECO:0000318"/>
    <property type="project" value="GO_Central"/>
</dbReference>
<dbReference type="GO" id="GO:0003735">
    <property type="term" value="F:structural constituent of ribosome"/>
    <property type="evidence" value="ECO:0000318"/>
    <property type="project" value="GO_Central"/>
</dbReference>
<dbReference type="GO" id="GO:0006412">
    <property type="term" value="P:translation"/>
    <property type="evidence" value="ECO:0007669"/>
    <property type="project" value="InterPro"/>
</dbReference>
<dbReference type="FunFam" id="2.30.30.790:FF:000007">
    <property type="entry name" value="Mitochondrial ribosomal protein, putative"/>
    <property type="match status" value="1"/>
</dbReference>
<dbReference type="Gene3D" id="2.30.30.790">
    <property type="match status" value="1"/>
</dbReference>
<dbReference type="InterPro" id="IPR001857">
    <property type="entry name" value="Ribosomal_bL19"/>
</dbReference>
<dbReference type="InterPro" id="IPR038657">
    <property type="entry name" value="Ribosomal_bL19_sf"/>
</dbReference>
<dbReference type="InterPro" id="IPR008991">
    <property type="entry name" value="Translation_prot_SH3-like_sf"/>
</dbReference>
<dbReference type="PANTHER" id="PTHR15680:SF9">
    <property type="entry name" value="LARGE RIBOSOMAL SUBUNIT PROTEIN BL19M"/>
    <property type="match status" value="1"/>
</dbReference>
<dbReference type="PANTHER" id="PTHR15680">
    <property type="entry name" value="RIBOSOMAL PROTEIN L19"/>
    <property type="match status" value="1"/>
</dbReference>
<dbReference type="Pfam" id="PF01245">
    <property type="entry name" value="Ribosomal_L19"/>
    <property type="match status" value="1"/>
</dbReference>
<dbReference type="SUPFAM" id="SSF50104">
    <property type="entry name" value="Translation proteins SH3-like domain"/>
    <property type="match status" value="1"/>
</dbReference>
<reference key="1">
    <citation type="journal article" date="2003" name="Nature">
        <title>The genome sequence of the filamentous fungus Neurospora crassa.</title>
        <authorList>
            <person name="Galagan J.E."/>
            <person name="Calvo S.E."/>
            <person name="Borkovich K.A."/>
            <person name="Selker E.U."/>
            <person name="Read N.D."/>
            <person name="Jaffe D.B."/>
            <person name="FitzHugh W."/>
            <person name="Ma L.-J."/>
            <person name="Smirnov S."/>
            <person name="Purcell S."/>
            <person name="Rehman B."/>
            <person name="Elkins T."/>
            <person name="Engels R."/>
            <person name="Wang S."/>
            <person name="Nielsen C.B."/>
            <person name="Butler J."/>
            <person name="Endrizzi M."/>
            <person name="Qui D."/>
            <person name="Ianakiev P."/>
            <person name="Bell-Pedersen D."/>
            <person name="Nelson M.A."/>
            <person name="Werner-Washburne M."/>
            <person name="Selitrennikoff C.P."/>
            <person name="Kinsey J.A."/>
            <person name="Braun E.L."/>
            <person name="Zelter A."/>
            <person name="Schulte U."/>
            <person name="Kothe G.O."/>
            <person name="Jedd G."/>
            <person name="Mewes H.-W."/>
            <person name="Staben C."/>
            <person name="Marcotte E."/>
            <person name="Greenberg D."/>
            <person name="Roy A."/>
            <person name="Foley K."/>
            <person name="Naylor J."/>
            <person name="Stange-Thomann N."/>
            <person name="Barrett R."/>
            <person name="Gnerre S."/>
            <person name="Kamal M."/>
            <person name="Kamvysselis M."/>
            <person name="Mauceli E.W."/>
            <person name="Bielke C."/>
            <person name="Rudd S."/>
            <person name="Frishman D."/>
            <person name="Krystofova S."/>
            <person name="Rasmussen C."/>
            <person name="Metzenberg R.L."/>
            <person name="Perkins D.D."/>
            <person name="Kroken S."/>
            <person name="Cogoni C."/>
            <person name="Macino G."/>
            <person name="Catcheside D.E.A."/>
            <person name="Li W."/>
            <person name="Pratt R.J."/>
            <person name="Osmani S.A."/>
            <person name="DeSouza C.P.C."/>
            <person name="Glass N.L."/>
            <person name="Orbach M.J."/>
            <person name="Berglund J.A."/>
            <person name="Voelker R."/>
            <person name="Yarden O."/>
            <person name="Plamann M."/>
            <person name="Seiler S."/>
            <person name="Dunlap J.C."/>
            <person name="Radford A."/>
            <person name="Aramayo R."/>
            <person name="Natvig D.O."/>
            <person name="Alex L.A."/>
            <person name="Mannhaupt G."/>
            <person name="Ebbole D.J."/>
            <person name="Freitag M."/>
            <person name="Paulsen I."/>
            <person name="Sachs M.S."/>
            <person name="Lander E.S."/>
            <person name="Nusbaum C."/>
            <person name="Birren B.W."/>
        </authorList>
    </citation>
    <scope>NUCLEOTIDE SEQUENCE [LARGE SCALE GENOMIC DNA]</scope>
    <source>
        <strain>ATCC 24698 / 74-OR23-1A / CBS 708.71 / DSM 1257 / FGSC 987</strain>
    </source>
</reference>
<reference key="2">
    <citation type="journal article" date="2006" name="FEMS Microbiol. Lett.">
        <title>Identification and comparative analysis of the large subunit mitochondrial ribosomal proteins of Neurospora crassa.</title>
        <authorList>
            <person name="Gan X."/>
            <person name="Arita K."/>
            <person name="Isono S."/>
            <person name="Kitakawa M."/>
            <person name="Yoshino K."/>
            <person name="Yonezawa K."/>
            <person name="Kato A."/>
            <person name="Inoue H."/>
            <person name="Isono K."/>
        </authorList>
    </citation>
    <scope>IDENTIFICATION IN THE MITOCHONDRIAL RIBOSOMAL LARGE COMPLEX</scope>
    <scope>IDENTIFICATION BY MASS SPECTROMETRY</scope>
</reference>
<reference evidence="7 8" key="3">
    <citation type="journal article" date="2020" name="Nat. Commun.">
        <title>Analysis of translating mitoribosome reveals functional characteristics of translation in mitochondria of fungi.</title>
        <authorList>
            <person name="Itoh Y."/>
            <person name="Naschberger A."/>
            <person name="Mortezaei N."/>
            <person name="Herrmann J.M."/>
            <person name="Amunts A."/>
        </authorList>
    </citation>
    <scope>STRUCTURE BY ELECTRON MICROSCOPY (2.74 ANGSTROMS)</scope>
</reference>
<comment type="function">
    <text evidence="6">Component of the mitochondrial ribosome (mitoribosome), a dedicated translation machinery responsible for the synthesis of mitochondrial genome-encoded proteins, including at least some of the essential transmembrane subunits of the mitochondrial respiratory chain. The mitoribosomes are attached to the mitochondrial inner membrane and translation products are cotranslationally integrated into the membrane.</text>
</comment>
<comment type="subunit">
    <text evidence="2 3">Component of the mitochondrial large ribosomal subunit (mt-LSU). Mature N.crassa 74S mitochondrial ribosomes consist of a small (37S) and a large (54S) subunit. The 37S small subunit contains a 16S ribosomal RNA (16S mt-rRNA) and 32 different proteins. The 54S large subunit contains a 23S rRNA (23S mt-rRNA) and 42 different proteins.</text>
</comment>
<comment type="subcellular location">
    <subcellularLocation>
        <location evidence="2 3">Mitochondrion</location>
    </subcellularLocation>
</comment>
<comment type="similarity">
    <text evidence="5">Belongs to the bacterial ribosomal protein bL19 family.</text>
</comment>
<accession>Q7RYW8</accession>
<name>IMG1_NEUCR</name>
<organism>
    <name type="scientific">Neurospora crassa (strain ATCC 24698 / 74-OR23-1A / CBS 708.71 / DSM 1257 / FGSC 987)</name>
    <dbReference type="NCBI Taxonomy" id="367110"/>
    <lineage>
        <taxon>Eukaryota</taxon>
        <taxon>Fungi</taxon>
        <taxon>Dikarya</taxon>
        <taxon>Ascomycota</taxon>
        <taxon>Pezizomycotina</taxon>
        <taxon>Sordariomycetes</taxon>
        <taxon>Sordariomycetidae</taxon>
        <taxon>Sordariales</taxon>
        <taxon>Sordariaceae</taxon>
        <taxon>Neurospora</taxon>
    </lineage>
</organism>
<sequence>MNVTASLSRRPLGCLKAGLCQSLIRGYATAVAASTTQSTGALPDHNFFRIADKHTKKTRTAFAVFTPPKSPTTLPPSSVVTKSKAFKIANSKLPPLMTKPPSDPMPLLTQQQIARMDPTGARTALFSKARHAARVGDVLMVTHRRGGEPFAGVCLAIRRSGIDTAILLRNHLGKVGVEMWYKIYNKNVAGIEIIKRRAKRARRAKLMYMRQPKHDMGSVEQYVFAWKKMRKVLSSKGLTGGVGGGGGKQKGQESKKKN</sequence>
<evidence type="ECO:0000256" key="1">
    <source>
        <dbReference type="SAM" id="MobiDB-lite"/>
    </source>
</evidence>
<evidence type="ECO:0000269" key="2">
    <source>
    </source>
</evidence>
<evidence type="ECO:0000269" key="3">
    <source>
    </source>
</evidence>
<evidence type="ECO:0000303" key="4">
    <source>
    </source>
</evidence>
<evidence type="ECO:0000305" key="5"/>
<evidence type="ECO:0000305" key="6">
    <source>
    </source>
</evidence>
<evidence type="ECO:0007744" key="7">
    <source>
        <dbReference type="PDB" id="6YWS"/>
    </source>
</evidence>
<evidence type="ECO:0007744" key="8">
    <source>
        <dbReference type="PDB" id="6YWV"/>
    </source>
</evidence>
<gene>
    <name type="primary">img1</name>
    <name type="ORF">NCU06450</name>
</gene>